<dbReference type="EC" id="3.1.-.-" evidence="1"/>
<dbReference type="EMBL" id="CP000753">
    <property type="protein sequence ID" value="ABS07507.1"/>
    <property type="molecule type" value="Genomic_DNA"/>
</dbReference>
<dbReference type="RefSeq" id="WP_012088669.1">
    <property type="nucleotide sequence ID" value="NC_009665.1"/>
</dbReference>
<dbReference type="SMR" id="A6WL18"/>
<dbReference type="KEGG" id="sbm:Shew185_1357"/>
<dbReference type="HOGENOM" id="CLU_004675_1_2_6"/>
<dbReference type="GO" id="GO:0008409">
    <property type="term" value="F:5'-3' exonuclease activity"/>
    <property type="evidence" value="ECO:0007669"/>
    <property type="project" value="InterPro"/>
</dbReference>
<dbReference type="GO" id="GO:0017108">
    <property type="term" value="F:5'-flap endonuclease activity"/>
    <property type="evidence" value="ECO:0007669"/>
    <property type="project" value="UniProtKB-UniRule"/>
</dbReference>
<dbReference type="GO" id="GO:0003677">
    <property type="term" value="F:DNA binding"/>
    <property type="evidence" value="ECO:0007669"/>
    <property type="project" value="UniProtKB-UniRule"/>
</dbReference>
<dbReference type="GO" id="GO:0000287">
    <property type="term" value="F:magnesium ion binding"/>
    <property type="evidence" value="ECO:0007669"/>
    <property type="project" value="UniProtKB-UniRule"/>
</dbReference>
<dbReference type="GO" id="GO:0030955">
    <property type="term" value="F:potassium ion binding"/>
    <property type="evidence" value="ECO:0007669"/>
    <property type="project" value="UniProtKB-UniRule"/>
</dbReference>
<dbReference type="GO" id="GO:0033567">
    <property type="term" value="P:DNA replication, Okazaki fragment processing"/>
    <property type="evidence" value="ECO:0007669"/>
    <property type="project" value="UniProtKB-UniRule"/>
</dbReference>
<dbReference type="CDD" id="cd09898">
    <property type="entry name" value="H3TH_53EXO"/>
    <property type="match status" value="1"/>
</dbReference>
<dbReference type="CDD" id="cd09859">
    <property type="entry name" value="PIN_53EXO"/>
    <property type="match status" value="1"/>
</dbReference>
<dbReference type="FunFam" id="1.10.150.20:FF:000003">
    <property type="entry name" value="DNA polymerase I"/>
    <property type="match status" value="1"/>
</dbReference>
<dbReference type="Gene3D" id="1.10.150.20">
    <property type="entry name" value="5' to 3' exonuclease, C-terminal subdomain"/>
    <property type="match status" value="1"/>
</dbReference>
<dbReference type="Gene3D" id="3.40.50.1010">
    <property type="entry name" value="5'-nuclease"/>
    <property type="match status" value="1"/>
</dbReference>
<dbReference type="HAMAP" id="MF_01192">
    <property type="entry name" value="Xni"/>
    <property type="match status" value="1"/>
</dbReference>
<dbReference type="InterPro" id="IPR020046">
    <property type="entry name" value="5-3_exonucl_a-hlix_arch_N"/>
</dbReference>
<dbReference type="InterPro" id="IPR002421">
    <property type="entry name" value="5-3_exonuclease"/>
</dbReference>
<dbReference type="InterPro" id="IPR036279">
    <property type="entry name" value="5-3_exonuclease_C_sf"/>
</dbReference>
<dbReference type="InterPro" id="IPR020045">
    <property type="entry name" value="DNA_polI_H3TH"/>
</dbReference>
<dbReference type="InterPro" id="IPR038969">
    <property type="entry name" value="FEN"/>
</dbReference>
<dbReference type="InterPro" id="IPR008918">
    <property type="entry name" value="HhH2"/>
</dbReference>
<dbReference type="InterPro" id="IPR029060">
    <property type="entry name" value="PIN-like_dom_sf"/>
</dbReference>
<dbReference type="InterPro" id="IPR022895">
    <property type="entry name" value="Xni"/>
</dbReference>
<dbReference type="NCBIfam" id="NF007017">
    <property type="entry name" value="PRK09482.1"/>
    <property type="match status" value="1"/>
</dbReference>
<dbReference type="PANTHER" id="PTHR42646:SF2">
    <property type="entry name" value="5'-3' EXONUCLEASE FAMILY PROTEIN"/>
    <property type="match status" value="1"/>
</dbReference>
<dbReference type="PANTHER" id="PTHR42646">
    <property type="entry name" value="FLAP ENDONUCLEASE XNI"/>
    <property type="match status" value="1"/>
</dbReference>
<dbReference type="Pfam" id="PF01367">
    <property type="entry name" value="5_3_exonuc"/>
    <property type="match status" value="1"/>
</dbReference>
<dbReference type="Pfam" id="PF02739">
    <property type="entry name" value="5_3_exonuc_N"/>
    <property type="match status" value="1"/>
</dbReference>
<dbReference type="SMART" id="SM00475">
    <property type="entry name" value="53EXOc"/>
    <property type="match status" value="1"/>
</dbReference>
<dbReference type="SMART" id="SM00279">
    <property type="entry name" value="HhH2"/>
    <property type="match status" value="1"/>
</dbReference>
<dbReference type="SUPFAM" id="SSF47807">
    <property type="entry name" value="5' to 3' exonuclease, C-terminal subdomain"/>
    <property type="match status" value="1"/>
</dbReference>
<dbReference type="SUPFAM" id="SSF88723">
    <property type="entry name" value="PIN domain-like"/>
    <property type="match status" value="1"/>
</dbReference>
<comment type="function">
    <text evidence="1">Has flap endonuclease activity. During DNA replication, flap endonucleases cleave the 5'-overhanging flap structure that is generated by displacement synthesis when DNA polymerase encounters the 5'-end of a downstream Okazaki fragment.</text>
</comment>
<comment type="cofactor">
    <cofactor evidence="1">
        <name>Mg(2+)</name>
        <dbReference type="ChEBI" id="CHEBI:18420"/>
    </cofactor>
    <text evidence="1">Binds 2 Mg(2+) per subunit. Only one magnesium ion has a direct interaction with the protein, the other interactions are indirect.</text>
</comment>
<comment type="cofactor">
    <cofactor evidence="1">
        <name>K(+)</name>
        <dbReference type="ChEBI" id="CHEBI:29103"/>
    </cofactor>
    <text evidence="1">Binds 1 K(+) per subunit. The potassium ion strongly increases the affinity for DNA.</text>
</comment>
<comment type="similarity">
    <text evidence="1">Belongs to the Xni family.</text>
</comment>
<evidence type="ECO:0000255" key="1">
    <source>
        <dbReference type="HAMAP-Rule" id="MF_01192"/>
    </source>
</evidence>
<sequence>MNKFLIIDGLNLVRRIYAAIPDETDMQSLTERVSSACTKLLRVHRPSHVAIVWDGDEISWRKQLYPDYKKGRKPMPEPLAQGLVALQDHLTAMHIGSIYAAAEADDVIATLAIKTAKAQGEAIIVSTDKGFSQLNHRHISQWDHFNQQYLDIAALEQKLGVERSQFLDLMALAGDSGNKIPGIAGIGPKSAAELLKTFRSLPTLFSSLSNLGAKQAKKLAEGKEMARLSYKLAQLQTDLPLNINLKDFRVIDSQPEKTINQD</sequence>
<keyword id="KW-0238">DNA-binding</keyword>
<keyword id="KW-0255">Endonuclease</keyword>
<keyword id="KW-0378">Hydrolase</keyword>
<keyword id="KW-0460">Magnesium</keyword>
<keyword id="KW-0479">Metal-binding</keyword>
<keyword id="KW-0540">Nuclease</keyword>
<keyword id="KW-0630">Potassium</keyword>
<feature type="chain" id="PRO_1000065884" description="Flap endonuclease Xni">
    <location>
        <begin position="1"/>
        <end position="262"/>
    </location>
</feature>
<feature type="domain" description="5'-3' exonuclease" evidence="1">
    <location>
        <begin position="162"/>
        <end position="259"/>
    </location>
</feature>
<feature type="region of interest" description="Interaction with DNA" evidence="1">
    <location>
        <begin position="185"/>
        <end position="190"/>
    </location>
</feature>
<feature type="binding site" evidence="1">
    <location>
        <position position="105"/>
    </location>
    <ligand>
        <name>Mg(2+)</name>
        <dbReference type="ChEBI" id="CHEBI:18420"/>
    </ligand>
</feature>
<feature type="binding site" evidence="1">
    <location>
        <position position="172"/>
    </location>
    <ligand>
        <name>K(+)</name>
        <dbReference type="ChEBI" id="CHEBI:29103"/>
    </ligand>
</feature>
<feature type="binding site" evidence="1">
    <location>
        <position position="173"/>
    </location>
    <ligand>
        <name>K(+)</name>
        <dbReference type="ChEBI" id="CHEBI:29103"/>
    </ligand>
</feature>
<feature type="binding site" evidence="1">
    <location>
        <position position="181"/>
    </location>
    <ligand>
        <name>K(+)</name>
        <dbReference type="ChEBI" id="CHEBI:29103"/>
    </ligand>
</feature>
<feature type="binding site" evidence="1">
    <location>
        <position position="183"/>
    </location>
    <ligand>
        <name>K(+)</name>
        <dbReference type="ChEBI" id="CHEBI:29103"/>
    </ligand>
</feature>
<feature type="binding site" evidence="1">
    <location>
        <position position="186"/>
    </location>
    <ligand>
        <name>K(+)</name>
        <dbReference type="ChEBI" id="CHEBI:29103"/>
    </ligand>
</feature>
<proteinExistence type="inferred from homology"/>
<gene>
    <name evidence="1" type="primary">xni</name>
    <name evidence="1" type="synonym">ygdG</name>
    <name type="ordered locus">Shew185_1357</name>
</gene>
<organism>
    <name type="scientific">Shewanella baltica (strain OS185)</name>
    <dbReference type="NCBI Taxonomy" id="402882"/>
    <lineage>
        <taxon>Bacteria</taxon>
        <taxon>Pseudomonadati</taxon>
        <taxon>Pseudomonadota</taxon>
        <taxon>Gammaproteobacteria</taxon>
        <taxon>Alteromonadales</taxon>
        <taxon>Shewanellaceae</taxon>
        <taxon>Shewanella</taxon>
    </lineage>
</organism>
<accession>A6WL18</accession>
<name>XNI_SHEB8</name>
<reference key="1">
    <citation type="submission" date="2007-07" db="EMBL/GenBank/DDBJ databases">
        <title>Complete sequence of chromosome of Shewanella baltica OS185.</title>
        <authorList>
            <consortium name="US DOE Joint Genome Institute"/>
            <person name="Copeland A."/>
            <person name="Lucas S."/>
            <person name="Lapidus A."/>
            <person name="Barry K."/>
            <person name="Glavina del Rio T."/>
            <person name="Dalin E."/>
            <person name="Tice H."/>
            <person name="Pitluck S."/>
            <person name="Sims D."/>
            <person name="Brettin T."/>
            <person name="Bruce D."/>
            <person name="Detter J.C."/>
            <person name="Han C."/>
            <person name="Schmutz J."/>
            <person name="Larimer F."/>
            <person name="Land M."/>
            <person name="Hauser L."/>
            <person name="Kyrpides N."/>
            <person name="Mikhailova N."/>
            <person name="Brettar I."/>
            <person name="Rodrigues J."/>
            <person name="Konstantinidis K."/>
            <person name="Tiedje J."/>
            <person name="Richardson P."/>
        </authorList>
    </citation>
    <scope>NUCLEOTIDE SEQUENCE [LARGE SCALE GENOMIC DNA]</scope>
    <source>
        <strain>OS185</strain>
    </source>
</reference>
<protein>
    <recommendedName>
        <fullName evidence="1">Flap endonuclease Xni</fullName>
        <shortName evidence="1">FEN</shortName>
        <ecNumber evidence="1">3.1.-.-</ecNumber>
    </recommendedName>
</protein>